<comment type="catalytic activity">
    <reaction evidence="1">
        <text>tRNA(Leu) + L-leucine + ATP = L-leucyl-tRNA(Leu) + AMP + diphosphate</text>
        <dbReference type="Rhea" id="RHEA:11688"/>
        <dbReference type="Rhea" id="RHEA-COMP:9613"/>
        <dbReference type="Rhea" id="RHEA-COMP:9622"/>
        <dbReference type="ChEBI" id="CHEBI:30616"/>
        <dbReference type="ChEBI" id="CHEBI:33019"/>
        <dbReference type="ChEBI" id="CHEBI:57427"/>
        <dbReference type="ChEBI" id="CHEBI:78442"/>
        <dbReference type="ChEBI" id="CHEBI:78494"/>
        <dbReference type="ChEBI" id="CHEBI:456215"/>
        <dbReference type="EC" id="6.1.1.4"/>
    </reaction>
</comment>
<comment type="subcellular location">
    <subcellularLocation>
        <location evidence="1">Cytoplasm</location>
    </subcellularLocation>
</comment>
<comment type="similarity">
    <text evidence="1">Belongs to the class-I aminoacyl-tRNA synthetase family.</text>
</comment>
<evidence type="ECO:0000255" key="1">
    <source>
        <dbReference type="HAMAP-Rule" id="MF_00049"/>
    </source>
</evidence>
<reference key="1">
    <citation type="journal article" date="2007" name="J. Bacteriol.">
        <title>Whole-genome analysis of the methyl tert-butyl ether-degrading beta-proteobacterium Methylibium petroleiphilum PM1.</title>
        <authorList>
            <person name="Kane S.R."/>
            <person name="Chakicherla A.Y."/>
            <person name="Chain P.S.G."/>
            <person name="Schmidt R."/>
            <person name="Shin M.W."/>
            <person name="Legler T.C."/>
            <person name="Scow K.M."/>
            <person name="Larimer F.W."/>
            <person name="Lucas S.M."/>
            <person name="Richardson P.M."/>
            <person name="Hristova K.R."/>
        </authorList>
    </citation>
    <scope>NUCLEOTIDE SEQUENCE [LARGE SCALE GENOMIC DNA]</scope>
    <source>
        <strain>ATCC BAA-1232 / LMG 22953 / PM1</strain>
    </source>
</reference>
<sequence>MSTPHPAPASAYEPGAIEAAAHAHWTARDAHRVVEDTSRPKFYACSMLPYPSGKLHMGHVRNYTINDMMARYLRMKGYNVLMPMGWDAFGLPAENAAIDKKVAPAQWTRDNIADMKSQMQPLGLAFDWSREVATCDPDYYKWNQWFFLKLLEKGIAYKKTQVVNWDPVDQTVLANEQVIDGRGWRSGAPVERREIPGYYLAITQYADELLANVADPASPGFLHGWPERVRLMQEHWIGKSAGVRFAFPHEIRDADGTLVGDGLMHVFTTRADTIMGVTFCAVAPEHPLATHAAASDPDLAAFIETCKAGGTTEAELATKDKEGRPTGLFVKHPLSGAPVPVWVGNYVLMGYGDGAVMGVPAHDERDFAFAKKYGIDILQVVHVDGEHFSYDHWQDWYADKQRGVTINSGNLSGLSYPVAVDAVAAALAAQGLGDKKTTWRLRDWGISRQRYWGTPIPIIHCTGSGPGSDNPGCGDVPVPEQDLPVLLPEDLIPDGSGNPLNKSAAFLNVACPKCGAPAKRETDTMDTFVDSSWYYMRYCCPDSDAAMVDSRNDYWMPMDQYIGGIEHAVLHLLYARFWTKAMRDCGLVKFDEPFTKLFTQGMLLNESYYREDASGKKRWFYPSEVEVQFDDKGHPVGAIAREDGQPVQLGGIEKMSKSKNNVVEPRDIIAKFGADTARLFTMFAGPPDQSAAWSDSGAEGSFRYLRRLWAFATKQREAVQAAGTDFADASRAAIDLRRDVHLLLRQVSHDYDRLQYNTVVSGAMKLLNALESAALADTAADRAALREGLGILLRALYPAAPHIAHALWQDLGYAAAHGDLLDAPWPAVDEQALVQDEIELVLQVNGKLRGALKVPASADRAAIEAAALASPELAKFAEGRTPKKVVVVPGRLVNVVV</sequence>
<proteinExistence type="inferred from homology"/>
<feature type="chain" id="PRO_0000334771" description="Leucine--tRNA ligase">
    <location>
        <begin position="1"/>
        <end position="897"/>
    </location>
</feature>
<feature type="short sequence motif" description="'HIGH' region">
    <location>
        <begin position="49"/>
        <end position="59"/>
    </location>
</feature>
<feature type="short sequence motif" description="'KMSKS' region">
    <location>
        <begin position="654"/>
        <end position="658"/>
    </location>
</feature>
<feature type="binding site" evidence="1">
    <location>
        <position position="657"/>
    </location>
    <ligand>
        <name>ATP</name>
        <dbReference type="ChEBI" id="CHEBI:30616"/>
    </ligand>
</feature>
<organism>
    <name type="scientific">Methylibium petroleiphilum (strain ATCC BAA-1232 / LMG 22953 / PM1)</name>
    <dbReference type="NCBI Taxonomy" id="420662"/>
    <lineage>
        <taxon>Bacteria</taxon>
        <taxon>Pseudomonadati</taxon>
        <taxon>Pseudomonadota</taxon>
        <taxon>Betaproteobacteria</taxon>
        <taxon>Burkholderiales</taxon>
        <taxon>Sphaerotilaceae</taxon>
        <taxon>Methylibium</taxon>
    </lineage>
</organism>
<protein>
    <recommendedName>
        <fullName evidence="1">Leucine--tRNA ligase</fullName>
        <ecNumber evidence="1">6.1.1.4</ecNumber>
    </recommendedName>
    <alternativeName>
        <fullName evidence="1">Leucyl-tRNA synthetase</fullName>
        <shortName evidence="1">LeuRS</shortName>
    </alternativeName>
</protein>
<name>SYL_METPP</name>
<dbReference type="EC" id="6.1.1.4" evidence="1"/>
<dbReference type="EMBL" id="CP000555">
    <property type="protein sequence ID" value="ABM93180.1"/>
    <property type="molecule type" value="Genomic_DNA"/>
</dbReference>
<dbReference type="RefSeq" id="WP_011827819.1">
    <property type="nucleotide sequence ID" value="NC_008825.1"/>
</dbReference>
<dbReference type="SMR" id="A2SC91"/>
<dbReference type="STRING" id="420662.Mpe_A0218"/>
<dbReference type="KEGG" id="mpt:Mpe_A0218"/>
<dbReference type="eggNOG" id="COG0495">
    <property type="taxonomic scope" value="Bacteria"/>
</dbReference>
<dbReference type="HOGENOM" id="CLU_004427_0_0_4"/>
<dbReference type="Proteomes" id="UP000000366">
    <property type="component" value="Chromosome"/>
</dbReference>
<dbReference type="GO" id="GO:0005829">
    <property type="term" value="C:cytosol"/>
    <property type="evidence" value="ECO:0007669"/>
    <property type="project" value="TreeGrafter"/>
</dbReference>
<dbReference type="GO" id="GO:0002161">
    <property type="term" value="F:aminoacyl-tRNA deacylase activity"/>
    <property type="evidence" value="ECO:0007669"/>
    <property type="project" value="InterPro"/>
</dbReference>
<dbReference type="GO" id="GO:0005524">
    <property type="term" value="F:ATP binding"/>
    <property type="evidence" value="ECO:0007669"/>
    <property type="project" value="UniProtKB-UniRule"/>
</dbReference>
<dbReference type="GO" id="GO:0004823">
    <property type="term" value="F:leucine-tRNA ligase activity"/>
    <property type="evidence" value="ECO:0007669"/>
    <property type="project" value="UniProtKB-UniRule"/>
</dbReference>
<dbReference type="GO" id="GO:0006429">
    <property type="term" value="P:leucyl-tRNA aminoacylation"/>
    <property type="evidence" value="ECO:0007669"/>
    <property type="project" value="UniProtKB-UniRule"/>
</dbReference>
<dbReference type="CDD" id="cd07958">
    <property type="entry name" value="Anticodon_Ia_Leu_BEm"/>
    <property type="match status" value="1"/>
</dbReference>
<dbReference type="CDD" id="cd00812">
    <property type="entry name" value="LeuRS_core"/>
    <property type="match status" value="1"/>
</dbReference>
<dbReference type="FunFam" id="1.10.730.10:FF:000002">
    <property type="entry name" value="Leucine--tRNA ligase"/>
    <property type="match status" value="1"/>
</dbReference>
<dbReference type="FunFam" id="2.20.28.290:FF:000001">
    <property type="entry name" value="Leucine--tRNA ligase"/>
    <property type="match status" value="1"/>
</dbReference>
<dbReference type="FunFam" id="3.40.50.620:FF:000003">
    <property type="entry name" value="Leucine--tRNA ligase"/>
    <property type="match status" value="1"/>
</dbReference>
<dbReference type="FunFam" id="3.90.740.10:FF:000012">
    <property type="entry name" value="Leucine--tRNA ligase"/>
    <property type="match status" value="1"/>
</dbReference>
<dbReference type="Gene3D" id="2.20.28.290">
    <property type="match status" value="1"/>
</dbReference>
<dbReference type="Gene3D" id="3.10.20.590">
    <property type="match status" value="1"/>
</dbReference>
<dbReference type="Gene3D" id="3.40.50.620">
    <property type="entry name" value="HUPs"/>
    <property type="match status" value="2"/>
</dbReference>
<dbReference type="Gene3D" id="1.10.730.10">
    <property type="entry name" value="Isoleucyl-tRNA Synthetase, Domain 1"/>
    <property type="match status" value="2"/>
</dbReference>
<dbReference type="Gene3D" id="3.90.740.10">
    <property type="entry name" value="Valyl/Leucyl/Isoleucyl-tRNA synthetase, editing domain"/>
    <property type="match status" value="1"/>
</dbReference>
<dbReference type="HAMAP" id="MF_00049_B">
    <property type="entry name" value="Leu_tRNA_synth_B"/>
    <property type="match status" value="1"/>
</dbReference>
<dbReference type="InterPro" id="IPR001412">
    <property type="entry name" value="aa-tRNA-synth_I_CS"/>
</dbReference>
<dbReference type="InterPro" id="IPR002300">
    <property type="entry name" value="aa-tRNA-synth_Ia"/>
</dbReference>
<dbReference type="InterPro" id="IPR002302">
    <property type="entry name" value="Leu-tRNA-ligase"/>
</dbReference>
<dbReference type="InterPro" id="IPR025709">
    <property type="entry name" value="Leu_tRNA-synth_edit"/>
</dbReference>
<dbReference type="InterPro" id="IPR013155">
    <property type="entry name" value="M/V/L/I-tRNA-synth_anticd-bd"/>
</dbReference>
<dbReference type="InterPro" id="IPR015413">
    <property type="entry name" value="Methionyl/Leucyl_tRNA_Synth"/>
</dbReference>
<dbReference type="InterPro" id="IPR014729">
    <property type="entry name" value="Rossmann-like_a/b/a_fold"/>
</dbReference>
<dbReference type="InterPro" id="IPR009080">
    <property type="entry name" value="tRNAsynth_Ia_anticodon-bd"/>
</dbReference>
<dbReference type="InterPro" id="IPR009008">
    <property type="entry name" value="Val/Leu/Ile-tRNA-synth_edit"/>
</dbReference>
<dbReference type="NCBIfam" id="TIGR00396">
    <property type="entry name" value="leuS_bact"/>
    <property type="match status" value="1"/>
</dbReference>
<dbReference type="PANTHER" id="PTHR43740:SF2">
    <property type="entry name" value="LEUCINE--TRNA LIGASE, MITOCHONDRIAL"/>
    <property type="match status" value="1"/>
</dbReference>
<dbReference type="PANTHER" id="PTHR43740">
    <property type="entry name" value="LEUCYL-TRNA SYNTHETASE"/>
    <property type="match status" value="1"/>
</dbReference>
<dbReference type="Pfam" id="PF08264">
    <property type="entry name" value="Anticodon_1"/>
    <property type="match status" value="1"/>
</dbReference>
<dbReference type="Pfam" id="PF00133">
    <property type="entry name" value="tRNA-synt_1"/>
    <property type="match status" value="1"/>
</dbReference>
<dbReference type="Pfam" id="PF13603">
    <property type="entry name" value="tRNA-synt_1_2"/>
    <property type="match status" value="1"/>
</dbReference>
<dbReference type="Pfam" id="PF09334">
    <property type="entry name" value="tRNA-synt_1g"/>
    <property type="match status" value="1"/>
</dbReference>
<dbReference type="PRINTS" id="PR00985">
    <property type="entry name" value="TRNASYNTHLEU"/>
</dbReference>
<dbReference type="SUPFAM" id="SSF47323">
    <property type="entry name" value="Anticodon-binding domain of a subclass of class I aminoacyl-tRNA synthetases"/>
    <property type="match status" value="1"/>
</dbReference>
<dbReference type="SUPFAM" id="SSF52374">
    <property type="entry name" value="Nucleotidylyl transferase"/>
    <property type="match status" value="1"/>
</dbReference>
<dbReference type="SUPFAM" id="SSF50677">
    <property type="entry name" value="ValRS/IleRS/LeuRS editing domain"/>
    <property type="match status" value="1"/>
</dbReference>
<dbReference type="PROSITE" id="PS00178">
    <property type="entry name" value="AA_TRNA_LIGASE_I"/>
    <property type="match status" value="1"/>
</dbReference>
<keyword id="KW-0030">Aminoacyl-tRNA synthetase</keyword>
<keyword id="KW-0067">ATP-binding</keyword>
<keyword id="KW-0963">Cytoplasm</keyword>
<keyword id="KW-0436">Ligase</keyword>
<keyword id="KW-0547">Nucleotide-binding</keyword>
<keyword id="KW-0648">Protein biosynthesis</keyword>
<keyword id="KW-1185">Reference proteome</keyword>
<gene>
    <name evidence="1" type="primary">leuS</name>
    <name type="ordered locus">Mpe_A0218</name>
</gene>
<accession>A2SC91</accession>